<proteinExistence type="inferred from homology"/>
<feature type="chain" id="PRO_1000025914" description="RNA-binding protein Hfq">
    <location>
        <begin position="1"/>
        <end position="78"/>
    </location>
</feature>
<feature type="domain" description="Sm" evidence="2">
    <location>
        <begin position="10"/>
        <end position="69"/>
    </location>
</feature>
<gene>
    <name evidence="1" type="primary">hfq</name>
    <name type="ordered locus">HEAR1269</name>
</gene>
<evidence type="ECO:0000255" key="1">
    <source>
        <dbReference type="HAMAP-Rule" id="MF_00436"/>
    </source>
</evidence>
<evidence type="ECO:0000255" key="2">
    <source>
        <dbReference type="PROSITE-ProRule" id="PRU01346"/>
    </source>
</evidence>
<comment type="function">
    <text evidence="1">RNA chaperone that binds small regulatory RNA (sRNAs) and mRNAs to facilitate mRNA translational regulation in response to envelope stress, environmental stress and changes in metabolite concentrations. Also binds with high specificity to tRNAs.</text>
</comment>
<comment type="subunit">
    <text evidence="1">Homohexamer.</text>
</comment>
<comment type="similarity">
    <text evidence="1">Belongs to the Hfq family.</text>
</comment>
<reference key="1">
    <citation type="journal article" date="2007" name="PLoS Genet.">
        <title>A tale of two oxidation states: bacterial colonization of arsenic-rich environments.</title>
        <authorList>
            <person name="Muller D."/>
            <person name="Medigue C."/>
            <person name="Koechler S."/>
            <person name="Barbe V."/>
            <person name="Barakat M."/>
            <person name="Talla E."/>
            <person name="Bonnefoy V."/>
            <person name="Krin E."/>
            <person name="Arsene-Ploetze F."/>
            <person name="Carapito C."/>
            <person name="Chandler M."/>
            <person name="Cournoyer B."/>
            <person name="Cruveiller S."/>
            <person name="Dossat C."/>
            <person name="Duval S."/>
            <person name="Heymann M."/>
            <person name="Leize E."/>
            <person name="Lieutaud A."/>
            <person name="Lievremont D."/>
            <person name="Makita Y."/>
            <person name="Mangenot S."/>
            <person name="Nitschke W."/>
            <person name="Ortet P."/>
            <person name="Perdrial N."/>
            <person name="Schoepp B."/>
            <person name="Siguier P."/>
            <person name="Simeonova D.D."/>
            <person name="Rouy Z."/>
            <person name="Segurens B."/>
            <person name="Turlin E."/>
            <person name="Vallenet D."/>
            <person name="van Dorsselaer A."/>
            <person name="Weiss S."/>
            <person name="Weissenbach J."/>
            <person name="Lett M.-C."/>
            <person name="Danchin A."/>
            <person name="Bertin P.N."/>
        </authorList>
    </citation>
    <scope>NUCLEOTIDE SEQUENCE [LARGE SCALE GENOMIC DNA]</scope>
    <source>
        <strain>ULPAs1</strain>
    </source>
</reference>
<organism>
    <name type="scientific">Herminiimonas arsenicoxydans</name>
    <dbReference type="NCBI Taxonomy" id="204773"/>
    <lineage>
        <taxon>Bacteria</taxon>
        <taxon>Pseudomonadati</taxon>
        <taxon>Pseudomonadota</taxon>
        <taxon>Betaproteobacteria</taxon>
        <taxon>Burkholderiales</taxon>
        <taxon>Oxalobacteraceae</taxon>
        <taxon>Herminiimonas</taxon>
    </lineage>
</organism>
<protein>
    <recommendedName>
        <fullName evidence="1">RNA-binding protein Hfq</fullName>
    </recommendedName>
</protein>
<sequence length="78" mass="8763">MTNKGQLLQDPFLNALRKEHVPVSIYLVNGIKLQGHIESFDQYVVLLRNTVTQMVYKHAISTVVPARAVNLSLESDAE</sequence>
<accession>A4G4K7</accession>
<keyword id="KW-1185">Reference proteome</keyword>
<keyword id="KW-0694">RNA-binding</keyword>
<keyword id="KW-0346">Stress response</keyword>
<dbReference type="EMBL" id="CU207211">
    <property type="protein sequence ID" value="CAL61444.1"/>
    <property type="molecule type" value="Genomic_DNA"/>
</dbReference>
<dbReference type="SMR" id="A4G4K7"/>
<dbReference type="STRING" id="204773.HEAR1269"/>
<dbReference type="KEGG" id="har:HEAR1269"/>
<dbReference type="eggNOG" id="COG1923">
    <property type="taxonomic scope" value="Bacteria"/>
</dbReference>
<dbReference type="HOGENOM" id="CLU_113688_2_2_4"/>
<dbReference type="OrthoDB" id="9799751at2"/>
<dbReference type="Proteomes" id="UP000006697">
    <property type="component" value="Chromosome"/>
</dbReference>
<dbReference type="GO" id="GO:0005829">
    <property type="term" value="C:cytosol"/>
    <property type="evidence" value="ECO:0007669"/>
    <property type="project" value="TreeGrafter"/>
</dbReference>
<dbReference type="GO" id="GO:0003723">
    <property type="term" value="F:RNA binding"/>
    <property type="evidence" value="ECO:0007669"/>
    <property type="project" value="UniProtKB-UniRule"/>
</dbReference>
<dbReference type="GO" id="GO:0006355">
    <property type="term" value="P:regulation of DNA-templated transcription"/>
    <property type="evidence" value="ECO:0007669"/>
    <property type="project" value="InterPro"/>
</dbReference>
<dbReference type="GO" id="GO:0043487">
    <property type="term" value="P:regulation of RNA stability"/>
    <property type="evidence" value="ECO:0007669"/>
    <property type="project" value="TreeGrafter"/>
</dbReference>
<dbReference type="GO" id="GO:0045974">
    <property type="term" value="P:regulation of translation, ncRNA-mediated"/>
    <property type="evidence" value="ECO:0007669"/>
    <property type="project" value="TreeGrafter"/>
</dbReference>
<dbReference type="CDD" id="cd01716">
    <property type="entry name" value="Hfq"/>
    <property type="match status" value="1"/>
</dbReference>
<dbReference type="FunFam" id="2.30.30.100:FF:000001">
    <property type="entry name" value="RNA-binding protein Hfq"/>
    <property type="match status" value="1"/>
</dbReference>
<dbReference type="Gene3D" id="2.30.30.100">
    <property type="match status" value="1"/>
</dbReference>
<dbReference type="HAMAP" id="MF_00436">
    <property type="entry name" value="Hfq"/>
    <property type="match status" value="1"/>
</dbReference>
<dbReference type="InterPro" id="IPR005001">
    <property type="entry name" value="Hfq"/>
</dbReference>
<dbReference type="InterPro" id="IPR010920">
    <property type="entry name" value="LSM_dom_sf"/>
</dbReference>
<dbReference type="InterPro" id="IPR047575">
    <property type="entry name" value="Sm"/>
</dbReference>
<dbReference type="NCBIfam" id="TIGR02383">
    <property type="entry name" value="Hfq"/>
    <property type="match status" value="1"/>
</dbReference>
<dbReference type="NCBIfam" id="NF001602">
    <property type="entry name" value="PRK00395.1"/>
    <property type="match status" value="1"/>
</dbReference>
<dbReference type="PANTHER" id="PTHR34772">
    <property type="entry name" value="RNA-BINDING PROTEIN HFQ"/>
    <property type="match status" value="1"/>
</dbReference>
<dbReference type="PANTHER" id="PTHR34772:SF1">
    <property type="entry name" value="RNA-BINDING PROTEIN HFQ"/>
    <property type="match status" value="1"/>
</dbReference>
<dbReference type="Pfam" id="PF17209">
    <property type="entry name" value="Hfq"/>
    <property type="match status" value="1"/>
</dbReference>
<dbReference type="SUPFAM" id="SSF50182">
    <property type="entry name" value="Sm-like ribonucleoproteins"/>
    <property type="match status" value="1"/>
</dbReference>
<dbReference type="PROSITE" id="PS52002">
    <property type="entry name" value="SM"/>
    <property type="match status" value="1"/>
</dbReference>
<name>HFQ_HERAR</name>